<feature type="chain" id="PRO_0000252326" description="Translationally-controlled tumor protein homolog">
    <location>
        <begin position="1"/>
        <end position="170"/>
    </location>
</feature>
<feature type="domain" description="TCTP" evidence="2">
    <location>
        <begin position="1"/>
        <end position="170"/>
    </location>
</feature>
<comment type="function">
    <text evidence="1">Involved in protein synthesis. Involved in microtubule stabilization (By similarity).</text>
</comment>
<comment type="subcellular location">
    <subcellularLocation>
        <location evidence="1">Cytoplasm</location>
        <location evidence="1">Cytoskeleton</location>
    </subcellularLocation>
</comment>
<comment type="similarity">
    <text evidence="2">Belongs to the TCTP family.</text>
</comment>
<dbReference type="EMBL" id="CM002238">
    <property type="protein sequence ID" value="EAA28119.1"/>
    <property type="molecule type" value="Genomic_DNA"/>
</dbReference>
<dbReference type="RefSeq" id="XP_957355.1">
    <property type="nucleotide sequence ID" value="XM_952262.3"/>
</dbReference>
<dbReference type="SMR" id="Q7RYV5"/>
<dbReference type="FunCoup" id="Q7RYV5">
    <property type="interactions" value="850"/>
</dbReference>
<dbReference type="STRING" id="367110.Q7RYV5"/>
<dbReference type="PaxDb" id="5141-EFNCRP00000006278"/>
<dbReference type="EnsemblFungi" id="EAA28119">
    <property type="protein sequence ID" value="EAA28119"/>
    <property type="gene ID" value="NCU06464"/>
</dbReference>
<dbReference type="GeneID" id="3873476"/>
<dbReference type="KEGG" id="ncr:NCU06464"/>
<dbReference type="VEuPathDB" id="FungiDB:NCU06464"/>
<dbReference type="HOGENOM" id="CLU_095877_0_0_1"/>
<dbReference type="InParanoid" id="Q7RYV5"/>
<dbReference type="OMA" id="CAMITEG"/>
<dbReference type="OrthoDB" id="10248936at2759"/>
<dbReference type="Proteomes" id="UP000001805">
    <property type="component" value="Chromosome 3, Linkage Group III"/>
</dbReference>
<dbReference type="GO" id="GO:0005737">
    <property type="term" value="C:cytoplasm"/>
    <property type="evidence" value="ECO:0000318"/>
    <property type="project" value="GO_Central"/>
</dbReference>
<dbReference type="GO" id="GO:0005874">
    <property type="term" value="C:microtubule"/>
    <property type="evidence" value="ECO:0007669"/>
    <property type="project" value="UniProtKB-KW"/>
</dbReference>
<dbReference type="GO" id="GO:0005509">
    <property type="term" value="F:calcium ion binding"/>
    <property type="evidence" value="ECO:0000318"/>
    <property type="project" value="GO_Central"/>
</dbReference>
<dbReference type="GO" id="GO:0006412">
    <property type="term" value="P:translation"/>
    <property type="evidence" value="ECO:0007669"/>
    <property type="project" value="UniProtKB-KW"/>
</dbReference>
<dbReference type="FunFam" id="2.170.150.10:FF:000002">
    <property type="entry name" value="Translationally-controlled tumor protein homolog"/>
    <property type="match status" value="1"/>
</dbReference>
<dbReference type="Gene3D" id="2.170.150.10">
    <property type="entry name" value="Metal Binding Protein, Guanine Nucleotide Exchange Factor, Chain A"/>
    <property type="match status" value="1"/>
</dbReference>
<dbReference type="InterPro" id="IPR011057">
    <property type="entry name" value="Mss4-like_sf"/>
</dbReference>
<dbReference type="InterPro" id="IPR011323">
    <property type="entry name" value="Mss4/transl-control_tumour"/>
</dbReference>
<dbReference type="InterPro" id="IPR034737">
    <property type="entry name" value="TCTP"/>
</dbReference>
<dbReference type="InterPro" id="IPR018103">
    <property type="entry name" value="Translation_control_tumour_CS"/>
</dbReference>
<dbReference type="InterPro" id="IPR018105">
    <property type="entry name" value="Translational_control_tumour_p"/>
</dbReference>
<dbReference type="PANTHER" id="PTHR11991">
    <property type="entry name" value="TRANSLATIONALLY CONTROLLED TUMOR PROTEIN-RELATED"/>
    <property type="match status" value="1"/>
</dbReference>
<dbReference type="PANTHER" id="PTHR11991:SF0">
    <property type="entry name" value="TRANSLATIONALLY-CONTROLLED TUMOR PROTEIN"/>
    <property type="match status" value="1"/>
</dbReference>
<dbReference type="Pfam" id="PF00838">
    <property type="entry name" value="TCTP"/>
    <property type="match status" value="1"/>
</dbReference>
<dbReference type="PRINTS" id="PR01653">
    <property type="entry name" value="TCTPROTEIN"/>
</dbReference>
<dbReference type="SUPFAM" id="SSF51316">
    <property type="entry name" value="Mss4-like"/>
    <property type="match status" value="1"/>
</dbReference>
<dbReference type="PROSITE" id="PS01002">
    <property type="entry name" value="TCTP_1"/>
    <property type="match status" value="1"/>
</dbReference>
<dbReference type="PROSITE" id="PS01003">
    <property type="entry name" value="TCTP_2"/>
    <property type="match status" value="1"/>
</dbReference>
<dbReference type="PROSITE" id="PS51797">
    <property type="entry name" value="TCTP_3"/>
    <property type="match status" value="1"/>
</dbReference>
<evidence type="ECO:0000250" key="1"/>
<evidence type="ECO:0000255" key="2">
    <source>
        <dbReference type="PROSITE-ProRule" id="PRU01133"/>
    </source>
</evidence>
<keyword id="KW-0963">Cytoplasm</keyword>
<keyword id="KW-0206">Cytoskeleton</keyword>
<keyword id="KW-0493">Microtubule</keyword>
<keyword id="KW-0648">Protein biosynthesis</keyword>
<keyword id="KW-1185">Reference proteome</keyword>
<name>TCTP_NEUCR</name>
<accession>Q7RYV5</accession>
<reference key="1">
    <citation type="journal article" date="2003" name="Nature">
        <title>The genome sequence of the filamentous fungus Neurospora crassa.</title>
        <authorList>
            <person name="Galagan J.E."/>
            <person name="Calvo S.E."/>
            <person name="Borkovich K.A."/>
            <person name="Selker E.U."/>
            <person name="Read N.D."/>
            <person name="Jaffe D.B."/>
            <person name="FitzHugh W."/>
            <person name="Ma L.-J."/>
            <person name="Smirnov S."/>
            <person name="Purcell S."/>
            <person name="Rehman B."/>
            <person name="Elkins T."/>
            <person name="Engels R."/>
            <person name="Wang S."/>
            <person name="Nielsen C.B."/>
            <person name="Butler J."/>
            <person name="Endrizzi M."/>
            <person name="Qui D."/>
            <person name="Ianakiev P."/>
            <person name="Bell-Pedersen D."/>
            <person name="Nelson M.A."/>
            <person name="Werner-Washburne M."/>
            <person name="Selitrennikoff C.P."/>
            <person name="Kinsey J.A."/>
            <person name="Braun E.L."/>
            <person name="Zelter A."/>
            <person name="Schulte U."/>
            <person name="Kothe G.O."/>
            <person name="Jedd G."/>
            <person name="Mewes H.-W."/>
            <person name="Staben C."/>
            <person name="Marcotte E."/>
            <person name="Greenberg D."/>
            <person name="Roy A."/>
            <person name="Foley K."/>
            <person name="Naylor J."/>
            <person name="Stange-Thomann N."/>
            <person name="Barrett R."/>
            <person name="Gnerre S."/>
            <person name="Kamal M."/>
            <person name="Kamvysselis M."/>
            <person name="Mauceli E.W."/>
            <person name="Bielke C."/>
            <person name="Rudd S."/>
            <person name="Frishman D."/>
            <person name="Krystofova S."/>
            <person name="Rasmussen C."/>
            <person name="Metzenberg R.L."/>
            <person name="Perkins D.D."/>
            <person name="Kroken S."/>
            <person name="Cogoni C."/>
            <person name="Macino G."/>
            <person name="Catcheside D.E.A."/>
            <person name="Li W."/>
            <person name="Pratt R.J."/>
            <person name="Osmani S.A."/>
            <person name="DeSouza C.P.C."/>
            <person name="Glass N.L."/>
            <person name="Orbach M.J."/>
            <person name="Berglund J.A."/>
            <person name="Voelker R."/>
            <person name="Yarden O."/>
            <person name="Plamann M."/>
            <person name="Seiler S."/>
            <person name="Dunlap J.C."/>
            <person name="Radford A."/>
            <person name="Aramayo R."/>
            <person name="Natvig D.O."/>
            <person name="Alex L.A."/>
            <person name="Mannhaupt G."/>
            <person name="Ebbole D.J."/>
            <person name="Freitag M."/>
            <person name="Paulsen I."/>
            <person name="Sachs M.S."/>
            <person name="Lander E.S."/>
            <person name="Nusbaum C."/>
            <person name="Birren B.W."/>
        </authorList>
    </citation>
    <scope>NUCLEOTIDE SEQUENCE [LARGE SCALE GENOMIC DNA]</scope>
    <source>
        <strain>ATCC 24698 / 74-OR23-1A / CBS 708.71 / DSM 1257 / FGSC 987</strain>
    </source>
</reference>
<organism>
    <name type="scientific">Neurospora crassa (strain ATCC 24698 / 74-OR23-1A / CBS 708.71 / DSM 1257 / FGSC 987)</name>
    <dbReference type="NCBI Taxonomy" id="367110"/>
    <lineage>
        <taxon>Eukaryota</taxon>
        <taxon>Fungi</taxon>
        <taxon>Dikarya</taxon>
        <taxon>Ascomycota</taxon>
        <taxon>Pezizomycotina</taxon>
        <taxon>Sordariomycetes</taxon>
        <taxon>Sordariomycetidae</taxon>
        <taxon>Sordariales</taxon>
        <taxon>Sordariaceae</taxon>
        <taxon>Neurospora</taxon>
    </lineage>
</organism>
<protein>
    <recommendedName>
        <fullName>Translationally-controlled tumor protein homolog</fullName>
        <shortName>TCTP</shortName>
    </recommendedName>
</protein>
<proteinExistence type="inferred from homology"/>
<gene>
    <name type="ORF">NCU06464</name>
</gene>
<sequence length="170" mass="19027">MLIYSDIITGDEIISDSYDLKEVDGIAYEVDCAMIEEGAVQVDIGANASAEEADEALDDGVVKVNNVVHSFRLQSTQFDKKGYLVYLKGYMKSVKNALKEQGKSDEEIKDFETKASAFAKNVILAKFKDWEFYTGESMNPDGMVVLLNYREDGTTPYVVVWKHGLKETKV</sequence>